<reference key="1">
    <citation type="journal article" date="2006" name="BMC Evol. Biol.">
        <title>Phylogenetic analyses of Vitis (Vitaceae) based on complete chloroplast genome sequences: effects of taxon sampling and phylogenetic methods on resolving relationships among rosids.</title>
        <authorList>
            <person name="Jansen R.K."/>
            <person name="Kaittanis C."/>
            <person name="Lee S.-B."/>
            <person name="Saski C."/>
            <person name="Tomkins J."/>
            <person name="Alverson A.J."/>
            <person name="Daniell H."/>
        </authorList>
    </citation>
    <scope>NUCLEOTIDE SEQUENCE [LARGE SCALE GENOMIC DNA]</scope>
    <source>
        <strain>cv. Maxxa</strain>
    </source>
</reference>
<gene>
    <name evidence="1" type="primary">rps16</name>
</gene>
<keyword id="KW-0150">Chloroplast</keyword>
<keyword id="KW-0934">Plastid</keyword>
<keyword id="KW-1185">Reference proteome</keyword>
<keyword id="KW-0687">Ribonucleoprotein</keyword>
<keyword id="KW-0689">Ribosomal protein</keyword>
<evidence type="ECO:0000255" key="1">
    <source>
        <dbReference type="HAMAP-Rule" id="MF_00385"/>
    </source>
</evidence>
<evidence type="ECO:0000305" key="2"/>
<geneLocation type="chloroplast"/>
<proteinExistence type="inferred from homology"/>
<organism>
    <name type="scientific">Vitis vinifera</name>
    <name type="common">Grape</name>
    <dbReference type="NCBI Taxonomy" id="29760"/>
    <lineage>
        <taxon>Eukaryota</taxon>
        <taxon>Viridiplantae</taxon>
        <taxon>Streptophyta</taxon>
        <taxon>Embryophyta</taxon>
        <taxon>Tracheophyta</taxon>
        <taxon>Spermatophyta</taxon>
        <taxon>Magnoliopsida</taxon>
        <taxon>eudicotyledons</taxon>
        <taxon>Gunneridae</taxon>
        <taxon>Pentapetalae</taxon>
        <taxon>rosids</taxon>
        <taxon>Vitales</taxon>
        <taxon>Vitaceae</taxon>
        <taxon>Viteae</taxon>
        <taxon>Vitis</taxon>
    </lineage>
</organism>
<dbReference type="EMBL" id="DQ424856">
    <property type="protein sequence ID" value="ABE47516.1"/>
    <property type="molecule type" value="Genomic_DNA"/>
</dbReference>
<dbReference type="RefSeq" id="YP_567058.1">
    <property type="nucleotide sequence ID" value="NC_007957.1"/>
</dbReference>
<dbReference type="SMR" id="Q0ZJ38"/>
<dbReference type="FunCoup" id="Q0ZJ38">
    <property type="interactions" value="9"/>
</dbReference>
<dbReference type="STRING" id="29760.Q0ZJ38"/>
<dbReference type="GeneID" id="4025122"/>
<dbReference type="KEGG" id="vvi:4025122"/>
<dbReference type="InParanoid" id="Q0ZJ38"/>
<dbReference type="OrthoDB" id="710097at71240"/>
<dbReference type="Proteomes" id="UP000009183">
    <property type="component" value="Chloroplast"/>
</dbReference>
<dbReference type="GO" id="GO:0009507">
    <property type="term" value="C:chloroplast"/>
    <property type="evidence" value="ECO:0007669"/>
    <property type="project" value="UniProtKB-SubCell"/>
</dbReference>
<dbReference type="GO" id="GO:0015935">
    <property type="term" value="C:small ribosomal subunit"/>
    <property type="evidence" value="ECO:0000318"/>
    <property type="project" value="GO_Central"/>
</dbReference>
<dbReference type="GO" id="GO:0003735">
    <property type="term" value="F:structural constituent of ribosome"/>
    <property type="evidence" value="ECO:0000318"/>
    <property type="project" value="GO_Central"/>
</dbReference>
<dbReference type="GO" id="GO:0006412">
    <property type="term" value="P:translation"/>
    <property type="evidence" value="ECO:0007669"/>
    <property type="project" value="UniProtKB-UniRule"/>
</dbReference>
<dbReference type="FunFam" id="3.30.1320.10:FF:000003">
    <property type="entry name" value="30S ribosomal protein S16, chloroplastic"/>
    <property type="match status" value="1"/>
</dbReference>
<dbReference type="Gene3D" id="3.30.1320.10">
    <property type="match status" value="1"/>
</dbReference>
<dbReference type="HAMAP" id="MF_00385">
    <property type="entry name" value="Ribosomal_bS16"/>
    <property type="match status" value="1"/>
</dbReference>
<dbReference type="InterPro" id="IPR000307">
    <property type="entry name" value="Ribosomal_bS16"/>
</dbReference>
<dbReference type="InterPro" id="IPR020592">
    <property type="entry name" value="Ribosomal_bS16_CS"/>
</dbReference>
<dbReference type="InterPro" id="IPR023803">
    <property type="entry name" value="Ribosomal_bS16_dom_sf"/>
</dbReference>
<dbReference type="NCBIfam" id="TIGR00002">
    <property type="entry name" value="S16"/>
    <property type="match status" value="1"/>
</dbReference>
<dbReference type="PANTHER" id="PTHR12919">
    <property type="entry name" value="30S RIBOSOMAL PROTEIN S16"/>
    <property type="match status" value="1"/>
</dbReference>
<dbReference type="PANTHER" id="PTHR12919:SF20">
    <property type="entry name" value="SMALL RIBOSOMAL SUBUNIT PROTEIN BS16M"/>
    <property type="match status" value="1"/>
</dbReference>
<dbReference type="Pfam" id="PF00886">
    <property type="entry name" value="Ribosomal_S16"/>
    <property type="match status" value="1"/>
</dbReference>
<dbReference type="SUPFAM" id="SSF54565">
    <property type="entry name" value="Ribosomal protein S16"/>
    <property type="match status" value="1"/>
</dbReference>
<dbReference type="PROSITE" id="PS00732">
    <property type="entry name" value="RIBOSOMAL_S16"/>
    <property type="match status" value="1"/>
</dbReference>
<protein>
    <recommendedName>
        <fullName evidence="1">Small ribosomal subunit protein bS16c</fullName>
    </recommendedName>
    <alternativeName>
        <fullName evidence="2">30S ribosomal protein S16, chloroplastic</fullName>
    </alternativeName>
</protein>
<name>RR16_VITVI</name>
<feature type="chain" id="PRO_0000276963" description="Small ribosomal subunit protein bS16c">
    <location>
        <begin position="1"/>
        <end position="91"/>
    </location>
</feature>
<accession>Q0ZJ38</accession>
<comment type="subcellular location">
    <subcellularLocation>
        <location>Plastid</location>
        <location>Chloroplast</location>
    </subcellularLocation>
</comment>
<comment type="similarity">
    <text evidence="1">Belongs to the bacterial ribosomal protein bS16 family.</text>
</comment>
<sequence length="91" mass="10673">MVKLRLKRCGRKQRAVYRIVAIDARSRREGRDLRKVGFYDPIKNQTYSNVPAILYFLEKGAQPTGTVHDISKKAEVFTELRLNQTKFKFNQ</sequence>